<accession>Q8CTE1</accession>
<protein>
    <recommendedName>
        <fullName evidence="1">Probable cell division protein WhiA</fullName>
    </recommendedName>
</protein>
<proteinExistence type="inferred from homology"/>
<reference key="1">
    <citation type="journal article" date="2003" name="Mol. Microbiol.">
        <title>Genome-based analysis of virulence genes in a non-biofilm-forming Staphylococcus epidermidis strain (ATCC 12228).</title>
        <authorList>
            <person name="Zhang Y.-Q."/>
            <person name="Ren S.-X."/>
            <person name="Li H.-L."/>
            <person name="Wang Y.-X."/>
            <person name="Fu G."/>
            <person name="Yang J."/>
            <person name="Qin Z.-Q."/>
            <person name="Miao Y.-G."/>
            <person name="Wang W.-Y."/>
            <person name="Chen R.-S."/>
            <person name="Shen Y."/>
            <person name="Chen Z."/>
            <person name="Yuan Z.-H."/>
            <person name="Zhao G.-P."/>
            <person name="Qu D."/>
            <person name="Danchin A."/>
            <person name="Wen Y.-M."/>
        </authorList>
    </citation>
    <scope>NUCLEOTIDE SEQUENCE [LARGE SCALE GENOMIC DNA]</scope>
    <source>
        <strain>ATCC 12228 / FDA PCI 1200</strain>
    </source>
</reference>
<organism>
    <name type="scientific">Staphylococcus epidermidis (strain ATCC 12228 / FDA PCI 1200)</name>
    <dbReference type="NCBI Taxonomy" id="176280"/>
    <lineage>
        <taxon>Bacteria</taxon>
        <taxon>Bacillati</taxon>
        <taxon>Bacillota</taxon>
        <taxon>Bacilli</taxon>
        <taxon>Bacillales</taxon>
        <taxon>Staphylococcaceae</taxon>
        <taxon>Staphylococcus</taxon>
    </lineage>
</organism>
<gene>
    <name evidence="1" type="primary">whiA</name>
    <name type="ordered locus">SE_0550</name>
</gene>
<evidence type="ECO:0000255" key="1">
    <source>
        <dbReference type="HAMAP-Rule" id="MF_01420"/>
    </source>
</evidence>
<comment type="function">
    <text evidence="1">Involved in cell division and chromosome segregation.</text>
</comment>
<comment type="similarity">
    <text evidence="1">Belongs to the WhiA family.</text>
</comment>
<name>WHIA_STAES</name>
<sequence>MSFASDMKNELTRIEVDESNAKAELSALIRMNGALSLSNQQFVINVQTENATTARRIYSLIKRIFNVEVEILVRKKMKLKKNNIYICRTKMLAKEILNDLGILKKGVFTHDIDPDMIKDDEMKRSYLRGAFLAGGSVNNPETSSYHLEIFSQYEDHSEGLTKLMNSYELNAKHLERKKGSIAYLKEAEKISDFLSLIGGYQALLKFEDVRIVRDMRNSVNRLVNCETANLNKTVSAAMKQVESIQLIDEEIGLENLPDRLREVAKLRVEHQEISLKELGEMVSTGPISKSGMNHRLRKLNELADKIRNGEQIEL</sequence>
<keyword id="KW-0131">Cell cycle</keyword>
<keyword id="KW-0132">Cell division</keyword>
<keyword id="KW-0238">DNA-binding</keyword>
<dbReference type="EMBL" id="AE015929">
    <property type="protein sequence ID" value="AAO04147.1"/>
    <property type="molecule type" value="Genomic_DNA"/>
</dbReference>
<dbReference type="RefSeq" id="NP_764105.1">
    <property type="nucleotide sequence ID" value="NC_004461.1"/>
</dbReference>
<dbReference type="RefSeq" id="WP_002438915.1">
    <property type="nucleotide sequence ID" value="NZ_WBME01000030.1"/>
</dbReference>
<dbReference type="SMR" id="Q8CTE1"/>
<dbReference type="GeneID" id="50019303"/>
<dbReference type="KEGG" id="sep:SE_0550"/>
<dbReference type="PATRIC" id="fig|176280.10.peg.521"/>
<dbReference type="eggNOG" id="COG1481">
    <property type="taxonomic scope" value="Bacteria"/>
</dbReference>
<dbReference type="HOGENOM" id="CLU_053282_0_0_9"/>
<dbReference type="OrthoDB" id="401278at2"/>
<dbReference type="Proteomes" id="UP000001411">
    <property type="component" value="Chromosome"/>
</dbReference>
<dbReference type="GO" id="GO:0003677">
    <property type="term" value="F:DNA binding"/>
    <property type="evidence" value="ECO:0007669"/>
    <property type="project" value="UniProtKB-UniRule"/>
</dbReference>
<dbReference type="GO" id="GO:0051301">
    <property type="term" value="P:cell division"/>
    <property type="evidence" value="ECO:0007669"/>
    <property type="project" value="UniProtKB-UniRule"/>
</dbReference>
<dbReference type="GO" id="GO:0043937">
    <property type="term" value="P:regulation of sporulation"/>
    <property type="evidence" value="ECO:0007669"/>
    <property type="project" value="InterPro"/>
</dbReference>
<dbReference type="FunFam" id="3.10.28.10:FF:000002">
    <property type="entry name" value="Probable cell division protein WhiA"/>
    <property type="match status" value="1"/>
</dbReference>
<dbReference type="Gene3D" id="3.10.28.10">
    <property type="entry name" value="Homing endonucleases"/>
    <property type="match status" value="1"/>
</dbReference>
<dbReference type="HAMAP" id="MF_01420">
    <property type="entry name" value="HTH_type_WhiA"/>
    <property type="match status" value="1"/>
</dbReference>
<dbReference type="InterPro" id="IPR027434">
    <property type="entry name" value="Homing_endonucl"/>
</dbReference>
<dbReference type="InterPro" id="IPR018478">
    <property type="entry name" value="Sporu_reg_WhiA_N_dom"/>
</dbReference>
<dbReference type="InterPro" id="IPR003802">
    <property type="entry name" value="Sporulation_regulator_WhiA"/>
</dbReference>
<dbReference type="InterPro" id="IPR023054">
    <property type="entry name" value="Sporulation_regulator_WhiA_C"/>
</dbReference>
<dbReference type="InterPro" id="IPR039518">
    <property type="entry name" value="WhiA_LAGLIDADG_dom"/>
</dbReference>
<dbReference type="NCBIfam" id="TIGR00647">
    <property type="entry name" value="DNA_bind_WhiA"/>
    <property type="match status" value="1"/>
</dbReference>
<dbReference type="PANTHER" id="PTHR37307">
    <property type="entry name" value="CELL DIVISION PROTEIN WHIA-RELATED"/>
    <property type="match status" value="1"/>
</dbReference>
<dbReference type="PANTHER" id="PTHR37307:SF1">
    <property type="entry name" value="CELL DIVISION PROTEIN WHIA-RELATED"/>
    <property type="match status" value="1"/>
</dbReference>
<dbReference type="Pfam" id="PF02650">
    <property type="entry name" value="HTH_WhiA"/>
    <property type="match status" value="1"/>
</dbReference>
<dbReference type="Pfam" id="PF14527">
    <property type="entry name" value="LAGLIDADG_WhiA"/>
    <property type="match status" value="1"/>
</dbReference>
<dbReference type="Pfam" id="PF10298">
    <property type="entry name" value="WhiA_N"/>
    <property type="match status" value="1"/>
</dbReference>
<dbReference type="SUPFAM" id="SSF55608">
    <property type="entry name" value="Homing endonucleases"/>
    <property type="match status" value="1"/>
</dbReference>
<feature type="chain" id="PRO_0000376566" description="Probable cell division protein WhiA">
    <location>
        <begin position="1"/>
        <end position="314"/>
    </location>
</feature>
<feature type="DNA-binding region" description="H-T-H motif" evidence="1">
    <location>
        <begin position="274"/>
        <end position="308"/>
    </location>
</feature>